<organism>
    <name type="scientific">Nitratidesulfovibrio vulgaris (strain DP4)</name>
    <name type="common">Desulfovibrio vulgaris</name>
    <dbReference type="NCBI Taxonomy" id="391774"/>
    <lineage>
        <taxon>Bacteria</taxon>
        <taxon>Pseudomonadati</taxon>
        <taxon>Thermodesulfobacteriota</taxon>
        <taxon>Desulfovibrionia</taxon>
        <taxon>Desulfovibrionales</taxon>
        <taxon>Desulfovibrionaceae</taxon>
        <taxon>Nitratidesulfovibrio</taxon>
    </lineage>
</organism>
<keyword id="KW-0975">Bacterial flagellum</keyword>
<keyword id="KW-0998">Cell outer membrane</keyword>
<keyword id="KW-0449">Lipoprotein</keyword>
<keyword id="KW-0472">Membrane</keyword>
<keyword id="KW-0564">Palmitate</keyword>
<keyword id="KW-0732">Signal</keyword>
<feature type="signal peptide" evidence="1">
    <location>
        <begin position="1"/>
        <end position="17"/>
    </location>
</feature>
<feature type="chain" id="PRO_1000050087" description="Flagellar L-ring protein">
    <location>
        <begin position="18"/>
        <end position="238"/>
    </location>
</feature>
<feature type="lipid moiety-binding region" description="N-palmitoyl cysteine" evidence="1">
    <location>
        <position position="18"/>
    </location>
</feature>
<feature type="lipid moiety-binding region" description="S-diacylglycerol cysteine" evidence="1">
    <location>
        <position position="18"/>
    </location>
</feature>
<name>FLGH_NITV4</name>
<dbReference type="EMBL" id="CP000527">
    <property type="protein sequence ID" value="ABM29442.1"/>
    <property type="molecule type" value="Genomic_DNA"/>
</dbReference>
<dbReference type="RefSeq" id="WP_010937821.1">
    <property type="nucleotide sequence ID" value="NC_008751.1"/>
</dbReference>
<dbReference type="SMR" id="A1VG76"/>
<dbReference type="KEGG" id="dvl:Dvul_2426"/>
<dbReference type="HOGENOM" id="CLU_069313_1_1_7"/>
<dbReference type="Proteomes" id="UP000009173">
    <property type="component" value="Chromosome"/>
</dbReference>
<dbReference type="GO" id="GO:0009427">
    <property type="term" value="C:bacterial-type flagellum basal body, distal rod, L ring"/>
    <property type="evidence" value="ECO:0007669"/>
    <property type="project" value="InterPro"/>
</dbReference>
<dbReference type="GO" id="GO:0009279">
    <property type="term" value="C:cell outer membrane"/>
    <property type="evidence" value="ECO:0007669"/>
    <property type="project" value="UniProtKB-SubCell"/>
</dbReference>
<dbReference type="GO" id="GO:0003774">
    <property type="term" value="F:cytoskeletal motor activity"/>
    <property type="evidence" value="ECO:0007669"/>
    <property type="project" value="InterPro"/>
</dbReference>
<dbReference type="GO" id="GO:0071973">
    <property type="term" value="P:bacterial-type flagellum-dependent cell motility"/>
    <property type="evidence" value="ECO:0007669"/>
    <property type="project" value="InterPro"/>
</dbReference>
<dbReference type="HAMAP" id="MF_00415">
    <property type="entry name" value="FlgH"/>
    <property type="match status" value="1"/>
</dbReference>
<dbReference type="InterPro" id="IPR000527">
    <property type="entry name" value="Flag_Lring"/>
</dbReference>
<dbReference type="NCBIfam" id="NF009336">
    <property type="entry name" value="PRK12696.1"/>
    <property type="match status" value="1"/>
</dbReference>
<dbReference type="PANTHER" id="PTHR34933">
    <property type="entry name" value="FLAGELLAR L-RING PROTEIN"/>
    <property type="match status" value="1"/>
</dbReference>
<dbReference type="PANTHER" id="PTHR34933:SF1">
    <property type="entry name" value="FLAGELLAR L-RING PROTEIN"/>
    <property type="match status" value="1"/>
</dbReference>
<dbReference type="Pfam" id="PF02107">
    <property type="entry name" value="FlgH"/>
    <property type="match status" value="1"/>
</dbReference>
<dbReference type="PRINTS" id="PR01008">
    <property type="entry name" value="FLGLRINGFLGH"/>
</dbReference>
<dbReference type="PROSITE" id="PS51257">
    <property type="entry name" value="PROKAR_LIPOPROTEIN"/>
    <property type="match status" value="1"/>
</dbReference>
<reference key="1">
    <citation type="journal article" date="2009" name="Environ. Microbiol.">
        <title>Contribution of mobile genetic elements to Desulfovibrio vulgaris genome plasticity.</title>
        <authorList>
            <person name="Walker C.B."/>
            <person name="Stolyar S."/>
            <person name="Chivian D."/>
            <person name="Pinel N."/>
            <person name="Gabster J.A."/>
            <person name="Dehal P.S."/>
            <person name="He Z."/>
            <person name="Yang Z.K."/>
            <person name="Yen H.C."/>
            <person name="Zhou J."/>
            <person name="Wall J.D."/>
            <person name="Hazen T.C."/>
            <person name="Arkin A.P."/>
            <person name="Stahl D.A."/>
        </authorList>
    </citation>
    <scope>NUCLEOTIDE SEQUENCE [LARGE SCALE GENOMIC DNA]</scope>
    <source>
        <strain>DP4</strain>
    </source>
</reference>
<evidence type="ECO:0000255" key="1">
    <source>
        <dbReference type="HAMAP-Rule" id="MF_00415"/>
    </source>
</evidence>
<comment type="function">
    <text evidence="1">Assembles around the rod to form the L-ring and probably protects the motor/basal body from shearing forces during rotation.</text>
</comment>
<comment type="subunit">
    <text evidence="1">The basal body constitutes a major portion of the flagellar organelle and consists of four rings (L,P,S, and M) mounted on a central rod.</text>
</comment>
<comment type="subcellular location">
    <subcellularLocation>
        <location evidence="1">Cell outer membrane</location>
        <topology evidence="1">Lipid-anchor</topology>
    </subcellularLocation>
    <subcellularLocation>
        <location evidence="1">Bacterial flagellum basal body</location>
    </subcellularLocation>
</comment>
<comment type="similarity">
    <text evidence="1">Belongs to the FlgH family.</text>
</comment>
<gene>
    <name evidence="1" type="primary">flgH</name>
    <name type="ordered locus">Dvul_2426</name>
</gene>
<accession>A1VG76</accession>
<protein>
    <recommendedName>
        <fullName evidence="1">Flagellar L-ring protein</fullName>
    </recommendedName>
    <alternativeName>
        <fullName evidence="1">Basal body L-ring protein</fullName>
    </alternativeName>
</protein>
<proteinExistence type="inferred from homology"/>
<sequence>MIRKTLAASCAVLLMAGCNAARQQASPLPPVAPPQTYVEPEQAAANPGSMFNDAEADLMFSDSRARRVGDIVLVKIVENAKAKNKADTTSERDSTNNYTVGAYFGQDSASINPMNPVGAFGGKVGTNALLQTGSKSKLDGKGETKRENTVTATIAARVVRVMPGGLLQVEGARETRVNDETQYIVLSGLVRSRDVASDNSVMSTQLADSRIAYYGKGVLADKQRPGWFSRLMDNLWPF</sequence>